<protein>
    <recommendedName>
        <fullName evidence="1">Large ribosomal subunit protein uL14</fullName>
    </recommendedName>
    <alternativeName>
        <fullName evidence="2">50S ribosomal protein L14</fullName>
    </alternativeName>
</protein>
<accession>Q9L0D0</accession>
<proteinExistence type="inferred from homology"/>
<dbReference type="EMBL" id="AL939121">
    <property type="protein sequence ID" value="CAB82080.1"/>
    <property type="molecule type" value="Genomic_DNA"/>
</dbReference>
<dbReference type="RefSeq" id="NP_628871.1">
    <property type="nucleotide sequence ID" value="NC_003888.3"/>
</dbReference>
<dbReference type="RefSeq" id="WP_003974257.1">
    <property type="nucleotide sequence ID" value="NZ_VNID01000016.1"/>
</dbReference>
<dbReference type="SMR" id="Q9L0D0"/>
<dbReference type="FunCoup" id="Q9L0D0">
    <property type="interactions" value="375"/>
</dbReference>
<dbReference type="STRING" id="100226.gene:17762361"/>
<dbReference type="PaxDb" id="100226-SCO4712"/>
<dbReference type="GeneID" id="97760380"/>
<dbReference type="KEGG" id="sco:SCO4712"/>
<dbReference type="PATRIC" id="fig|100226.15.peg.4783"/>
<dbReference type="eggNOG" id="COG0093">
    <property type="taxonomic scope" value="Bacteria"/>
</dbReference>
<dbReference type="HOGENOM" id="CLU_095071_2_1_11"/>
<dbReference type="InParanoid" id="Q9L0D0"/>
<dbReference type="OrthoDB" id="9806379at2"/>
<dbReference type="PhylomeDB" id="Q9L0D0"/>
<dbReference type="PRO" id="PR:Q9L0D0"/>
<dbReference type="Proteomes" id="UP000001973">
    <property type="component" value="Chromosome"/>
</dbReference>
<dbReference type="GO" id="GO:0022625">
    <property type="term" value="C:cytosolic large ribosomal subunit"/>
    <property type="evidence" value="ECO:0000318"/>
    <property type="project" value="GO_Central"/>
</dbReference>
<dbReference type="GO" id="GO:0070180">
    <property type="term" value="F:large ribosomal subunit rRNA binding"/>
    <property type="evidence" value="ECO:0000318"/>
    <property type="project" value="GO_Central"/>
</dbReference>
<dbReference type="GO" id="GO:0003735">
    <property type="term" value="F:structural constituent of ribosome"/>
    <property type="evidence" value="ECO:0000318"/>
    <property type="project" value="GO_Central"/>
</dbReference>
<dbReference type="GO" id="GO:0006412">
    <property type="term" value="P:translation"/>
    <property type="evidence" value="ECO:0007669"/>
    <property type="project" value="UniProtKB-UniRule"/>
</dbReference>
<dbReference type="CDD" id="cd00337">
    <property type="entry name" value="Ribosomal_uL14"/>
    <property type="match status" value="1"/>
</dbReference>
<dbReference type="FunFam" id="2.40.150.20:FF:000001">
    <property type="entry name" value="50S ribosomal protein L14"/>
    <property type="match status" value="1"/>
</dbReference>
<dbReference type="Gene3D" id="2.40.150.20">
    <property type="entry name" value="Ribosomal protein L14"/>
    <property type="match status" value="1"/>
</dbReference>
<dbReference type="HAMAP" id="MF_01367">
    <property type="entry name" value="Ribosomal_uL14"/>
    <property type="match status" value="1"/>
</dbReference>
<dbReference type="InterPro" id="IPR000218">
    <property type="entry name" value="Ribosomal_uL14"/>
</dbReference>
<dbReference type="InterPro" id="IPR005745">
    <property type="entry name" value="Ribosomal_uL14_bac-type"/>
</dbReference>
<dbReference type="InterPro" id="IPR019972">
    <property type="entry name" value="Ribosomal_uL14_CS"/>
</dbReference>
<dbReference type="InterPro" id="IPR036853">
    <property type="entry name" value="Ribosomal_uL14_sf"/>
</dbReference>
<dbReference type="NCBIfam" id="TIGR01067">
    <property type="entry name" value="rplN_bact"/>
    <property type="match status" value="1"/>
</dbReference>
<dbReference type="PANTHER" id="PTHR11761">
    <property type="entry name" value="50S/60S RIBOSOMAL PROTEIN L14/L23"/>
    <property type="match status" value="1"/>
</dbReference>
<dbReference type="PANTHER" id="PTHR11761:SF3">
    <property type="entry name" value="LARGE RIBOSOMAL SUBUNIT PROTEIN UL14M"/>
    <property type="match status" value="1"/>
</dbReference>
<dbReference type="Pfam" id="PF00238">
    <property type="entry name" value="Ribosomal_L14"/>
    <property type="match status" value="1"/>
</dbReference>
<dbReference type="SMART" id="SM01374">
    <property type="entry name" value="Ribosomal_L14"/>
    <property type="match status" value="1"/>
</dbReference>
<dbReference type="SUPFAM" id="SSF50193">
    <property type="entry name" value="Ribosomal protein L14"/>
    <property type="match status" value="1"/>
</dbReference>
<dbReference type="PROSITE" id="PS00049">
    <property type="entry name" value="RIBOSOMAL_L14"/>
    <property type="match status" value="1"/>
</dbReference>
<name>RL14_STRCO</name>
<gene>
    <name evidence="1" type="primary">rplN</name>
    <name type="ordered locus">SCO4712</name>
    <name type="ORF">SCD31.37</name>
</gene>
<reference key="1">
    <citation type="journal article" date="2002" name="Nature">
        <title>Complete genome sequence of the model actinomycete Streptomyces coelicolor A3(2).</title>
        <authorList>
            <person name="Bentley S.D."/>
            <person name="Chater K.F."/>
            <person name="Cerdeno-Tarraga A.-M."/>
            <person name="Challis G.L."/>
            <person name="Thomson N.R."/>
            <person name="James K.D."/>
            <person name="Harris D.E."/>
            <person name="Quail M.A."/>
            <person name="Kieser H."/>
            <person name="Harper D."/>
            <person name="Bateman A."/>
            <person name="Brown S."/>
            <person name="Chandra G."/>
            <person name="Chen C.W."/>
            <person name="Collins M."/>
            <person name="Cronin A."/>
            <person name="Fraser A."/>
            <person name="Goble A."/>
            <person name="Hidalgo J."/>
            <person name="Hornsby T."/>
            <person name="Howarth S."/>
            <person name="Huang C.-H."/>
            <person name="Kieser T."/>
            <person name="Larke L."/>
            <person name="Murphy L.D."/>
            <person name="Oliver K."/>
            <person name="O'Neil S."/>
            <person name="Rabbinowitsch E."/>
            <person name="Rajandream M.A."/>
            <person name="Rutherford K.M."/>
            <person name="Rutter S."/>
            <person name="Seeger K."/>
            <person name="Saunders D."/>
            <person name="Sharp S."/>
            <person name="Squares R."/>
            <person name="Squares S."/>
            <person name="Taylor K."/>
            <person name="Warren T."/>
            <person name="Wietzorrek A."/>
            <person name="Woodward J.R."/>
            <person name="Barrell B.G."/>
            <person name="Parkhill J."/>
            <person name="Hopwood D.A."/>
        </authorList>
    </citation>
    <scope>NUCLEOTIDE SEQUENCE [LARGE SCALE GENOMIC DNA]</scope>
    <source>
        <strain>ATCC BAA-471 / A3(2) / M145</strain>
    </source>
</reference>
<organism>
    <name type="scientific">Streptomyces coelicolor (strain ATCC BAA-471 / A3(2) / M145)</name>
    <dbReference type="NCBI Taxonomy" id="100226"/>
    <lineage>
        <taxon>Bacteria</taxon>
        <taxon>Bacillati</taxon>
        <taxon>Actinomycetota</taxon>
        <taxon>Actinomycetes</taxon>
        <taxon>Kitasatosporales</taxon>
        <taxon>Streptomycetaceae</taxon>
        <taxon>Streptomyces</taxon>
        <taxon>Streptomyces albidoflavus group</taxon>
    </lineage>
</organism>
<sequence length="122" mass="13370">MIQQESRLRVADNTGAKEILTIRVLGGSGRRYAGIGDVIVATVKDAIPGGNVKKGDVVKAVIVRTVKERRRPDGSYIRFDENAAVILKNDGDPRGTRIFGPVGRELREKKFMKIISLAPEVL</sequence>
<comment type="function">
    <text evidence="1">Binds to 23S rRNA. Forms part of two intersubunit bridges in the 70S ribosome.</text>
</comment>
<comment type="subunit">
    <text evidence="1">Part of the 50S ribosomal subunit. Forms a cluster with proteins L3 and L19. In the 70S ribosome, L14 and L19 interact and together make contacts with the 16S rRNA in bridges B5 and B8.</text>
</comment>
<comment type="similarity">
    <text evidence="1">Belongs to the universal ribosomal protein uL14 family.</text>
</comment>
<evidence type="ECO:0000255" key="1">
    <source>
        <dbReference type="HAMAP-Rule" id="MF_01367"/>
    </source>
</evidence>
<evidence type="ECO:0000305" key="2"/>
<feature type="chain" id="PRO_0000266568" description="Large ribosomal subunit protein uL14">
    <location>
        <begin position="1"/>
        <end position="122"/>
    </location>
</feature>
<keyword id="KW-1185">Reference proteome</keyword>
<keyword id="KW-0687">Ribonucleoprotein</keyword>
<keyword id="KW-0689">Ribosomal protein</keyword>
<keyword id="KW-0694">RNA-binding</keyword>
<keyword id="KW-0699">rRNA-binding</keyword>